<name>BRCC3_RAT</name>
<evidence type="ECO:0000250" key="1">
    <source>
        <dbReference type="UniProtKB" id="E2AXC7"/>
    </source>
</evidence>
<evidence type="ECO:0000250" key="2">
    <source>
        <dbReference type="UniProtKB" id="P46736"/>
    </source>
</evidence>
<evidence type="ECO:0000250" key="3">
    <source>
        <dbReference type="UniProtKB" id="P46737"/>
    </source>
</evidence>
<evidence type="ECO:0000255" key="4">
    <source>
        <dbReference type="PROSITE-ProRule" id="PRU01182"/>
    </source>
</evidence>
<evidence type="ECO:0000305" key="5"/>
<proteinExistence type="evidence at transcript level"/>
<organism>
    <name type="scientific">Rattus norvegicus</name>
    <name type="common">Rat</name>
    <dbReference type="NCBI Taxonomy" id="10116"/>
    <lineage>
        <taxon>Eukaryota</taxon>
        <taxon>Metazoa</taxon>
        <taxon>Chordata</taxon>
        <taxon>Craniata</taxon>
        <taxon>Vertebrata</taxon>
        <taxon>Euteleostomi</taxon>
        <taxon>Mammalia</taxon>
        <taxon>Eutheria</taxon>
        <taxon>Euarchontoglires</taxon>
        <taxon>Glires</taxon>
        <taxon>Rodentia</taxon>
        <taxon>Myomorpha</taxon>
        <taxon>Muroidea</taxon>
        <taxon>Muridae</taxon>
        <taxon>Murinae</taxon>
        <taxon>Rattus</taxon>
    </lineage>
</organism>
<feature type="initiator methionine" description="Removed" evidence="2">
    <location>
        <position position="1"/>
    </location>
</feature>
<feature type="chain" id="PRO_0000373946" description="Lys-63-specific deubiquitinase BRCC36">
    <location>
        <begin position="2"/>
        <end position="291"/>
    </location>
</feature>
<feature type="domain" description="MPN" evidence="4">
    <location>
        <begin position="12"/>
        <end position="179"/>
    </location>
</feature>
<feature type="short sequence motif" description="JAMM motif" evidence="4">
    <location>
        <begin position="122"/>
        <end position="135"/>
    </location>
</feature>
<feature type="binding site" evidence="4">
    <location>
        <position position="122"/>
    </location>
    <ligand>
        <name>Zn(2+)</name>
        <dbReference type="ChEBI" id="CHEBI:29105"/>
        <note>catalytic</note>
    </ligand>
</feature>
<feature type="binding site" evidence="4">
    <location>
        <position position="124"/>
    </location>
    <ligand>
        <name>Zn(2+)</name>
        <dbReference type="ChEBI" id="CHEBI:29105"/>
        <note>catalytic</note>
    </ligand>
</feature>
<feature type="binding site" evidence="4">
    <location>
        <position position="135"/>
    </location>
    <ligand>
        <name>Zn(2+)</name>
        <dbReference type="ChEBI" id="CHEBI:29105"/>
        <note>catalytic</note>
    </ligand>
</feature>
<feature type="modified residue" description="N-acetylalanine" evidence="2">
    <location>
        <position position="2"/>
    </location>
</feature>
<feature type="modified residue" description="Phosphoserine" evidence="2">
    <location>
        <position position="233"/>
    </location>
</feature>
<comment type="function">
    <text evidence="2 3">Metalloprotease that specifically cleaves 'Lys-63'-linked polyubiquitin chains. Does not have activity toward 'Lys-48'-linked polyubiquitin chains. Component of the BRCA1-A complex, a complex that specifically recognizes 'Lys-63'-linked ubiquitinated histones H2A and H2AX at DNA lesions sites, leading to target the BRCA1-BARD1 heterodimer to sites of DNA damage at double-strand breaks (DSBs). In the BRCA1-A complex, it specifically removes 'Lys-63'-linked ubiquitin on histones H2A and H2AX, antagonizing the RNF8-dependent ubiquitination at double-strand breaks (DSBs). Catalytic subunit of the BRISC complex, a multiprotein complex that specifically cleaves 'Lys-63'-linked ubiquitin in various substrates. Mediates the specific 'Lys-63'-specific deubiquitination associated with the COP9 signalosome complex (CSN), via the interaction of the BRISC complex with the CSN complex. The BRISC complex is required for normal mitotic spindle assembly and microtubule attachment to kinetochores via its role in deubiquitinating NUMA1. Plays a role in interferon signaling via its role in the deubiquitination of the interferon receptor IFNAR1; deubiquitination increases IFNAR1 activity by enhancing its stability and cell surface expression (By similarity). Acts as a regulator of the NLRP3 inflammasome by mediating deubiquitination of NLRP3, leading to NLRP3 inflammasome assembly (By similarity). Down-regulates the response to bacterial lipopolysaccharide (LPS) via its role in IFNAR1 deubiquitination (By similarity). Deubiquitinates HDAC1 and PWWP2B leading to their stabilization (By similarity).</text>
</comment>
<comment type="cofactor">
    <cofactor evidence="1 2">
        <name>Zn(2+)</name>
        <dbReference type="ChEBI" id="CHEBI:29105"/>
    </cofactor>
    <text evidence="1">Binds 1 zinc ion per subunit.</text>
</comment>
<comment type="subunit">
    <text evidence="2 3">Component of the ARISC complex, at least composed of UIMC1/RAP80, ABRAXAS1, BRCC3/BRCC36, BABAM2 and BABAM1/NBA1. Component of the BRCA1-A complex, at least composed of BRCA1, BARD1, UIMC1/RAP80, ABRAXAS1, BRCC3/BRCC36, BABAM2 and BABAM1/NBA1. In the BRCA1-A complex, interacts directly with ABRAXAS1 and BABAM2. Component of the BRISC complex, at least composed of ABRAXAS2, BRCC3/BRCC36, BABAM2 and BABAM1/NBA1. Identified in a complex with SHMT2 and the other subunits of the BRISC complex. In the BRISC complex, interacts directly with ABRAXAS2. Identified in a complex with ABRAXAS2 and NUMA1. The BRISC complex interacts with the CSN complex. Component of the BRCA1/BRCA2 containing complex (BRCC), which also contains BRCA1, BRCA2, BARD1, BABAM2 and RAD51. BRCC is a ubiquitin E3 ligase complex that enhances cellular survival following DNA damage. Interacts with BRCA1. Binds polyubiquitin (By similarity). Interacts with PWWP2B (By similarity). Interacts with HDAC1; this interaction is enhanced in the presence of PWWP2B (By similarity).</text>
</comment>
<comment type="subcellular location">
    <subcellularLocation>
        <location evidence="2">Nucleus</location>
    </subcellularLocation>
    <subcellularLocation>
        <location evidence="2">Cytoplasm</location>
    </subcellularLocation>
    <subcellularLocation>
        <location evidence="2">Cytoplasm</location>
        <location evidence="2">Cytoskeleton</location>
        <location evidence="2">Spindle pole</location>
    </subcellularLocation>
    <text evidence="2">Localizes at sites of DNA damage at double-strand breaks (DSBs). Interaction with ABRAXAS2 retains BRCC3 in the cytoplasm.</text>
</comment>
<comment type="similarity">
    <text evidence="5">Belongs to the peptidase M67A family. BRCC36 subfamily.</text>
</comment>
<protein>
    <recommendedName>
        <fullName>Lys-63-specific deubiquitinase BRCC36</fullName>
        <ecNumber evidence="2">3.4.19.-</ecNumber>
    </recommendedName>
    <alternativeName>
        <fullName>BRCA1-A complex subunit BRCC36</fullName>
    </alternativeName>
    <alternativeName>
        <fullName>BRCA1/BRCA2-containing complex subunit 3</fullName>
    </alternativeName>
    <alternativeName>
        <fullName>BRCA1/BRCA2-containing complex subunit 36</fullName>
    </alternativeName>
    <alternativeName>
        <fullName>BRISC complex subunit BRCC36</fullName>
    </alternativeName>
</protein>
<accession>B2RYM5</accession>
<dbReference type="EC" id="3.4.19.-" evidence="2"/>
<dbReference type="EMBL" id="CH474092">
    <property type="protein sequence ID" value="EDL83574.1"/>
    <property type="molecule type" value="Genomic_DNA"/>
</dbReference>
<dbReference type="EMBL" id="BC166833">
    <property type="protein sequence ID" value="AAI66833.1"/>
    <property type="molecule type" value="mRNA"/>
</dbReference>
<dbReference type="RefSeq" id="NP_001120772.1">
    <property type="nucleotide sequence ID" value="NM_001127300.1"/>
</dbReference>
<dbReference type="SMR" id="B2RYM5"/>
<dbReference type="BioGRID" id="261425">
    <property type="interactions" value="1"/>
</dbReference>
<dbReference type="FunCoup" id="B2RYM5">
    <property type="interactions" value="2362"/>
</dbReference>
<dbReference type="STRING" id="10116.ENSRNOP00000066438"/>
<dbReference type="MEROPS" id="M67.004"/>
<dbReference type="iPTMnet" id="B2RYM5"/>
<dbReference type="PhosphoSitePlus" id="B2RYM5"/>
<dbReference type="jPOST" id="B2RYM5"/>
<dbReference type="PaxDb" id="10116-ENSRNOP00000066438"/>
<dbReference type="PeptideAtlas" id="B2RYM5"/>
<dbReference type="Ensembl" id="ENSRNOT00000071068.3">
    <property type="protein sequence ID" value="ENSRNOP00000066438.1"/>
    <property type="gene ID" value="ENSRNOG00000048061.3"/>
</dbReference>
<dbReference type="GeneID" id="316794"/>
<dbReference type="KEGG" id="rno:316794"/>
<dbReference type="AGR" id="RGD:1588543"/>
<dbReference type="CTD" id="79184"/>
<dbReference type="RGD" id="1588543">
    <property type="gene designation" value="Brcc3"/>
</dbReference>
<dbReference type="eggNOG" id="KOG1555">
    <property type="taxonomic scope" value="Eukaryota"/>
</dbReference>
<dbReference type="GeneTree" id="ENSGT00390000000360"/>
<dbReference type="HOGENOM" id="CLU_053351_0_0_1"/>
<dbReference type="InParanoid" id="B2RYM5"/>
<dbReference type="OMA" id="CIGEIDT"/>
<dbReference type="OrthoDB" id="446074at2759"/>
<dbReference type="PhylomeDB" id="B2RYM5"/>
<dbReference type="Reactome" id="R-RNO-5689901">
    <property type="pathway name" value="Metalloprotease DUBs"/>
</dbReference>
<dbReference type="Reactome" id="R-RNO-5693565">
    <property type="pathway name" value="Recruitment and ATM-mediated phosphorylation of repair and signaling proteins at DNA double strand breaks"/>
</dbReference>
<dbReference type="Reactome" id="R-RNO-5693571">
    <property type="pathway name" value="Nonhomologous End-Joining (NHEJ)"/>
</dbReference>
<dbReference type="Reactome" id="R-RNO-5693607">
    <property type="pathway name" value="Processing of DNA double-strand break ends"/>
</dbReference>
<dbReference type="Reactome" id="R-RNO-69473">
    <property type="pathway name" value="G2/M DNA damage checkpoint"/>
</dbReference>
<dbReference type="PRO" id="PR:B2RYM5"/>
<dbReference type="Proteomes" id="UP000002494">
    <property type="component" value="Chromosome 9"/>
</dbReference>
<dbReference type="Proteomes" id="UP000234681">
    <property type="component" value="Chromosome 9"/>
</dbReference>
<dbReference type="Bgee" id="ENSRNOG00000048061">
    <property type="expression patterns" value="Expressed in Ammon's horn and 20 other cell types or tissues"/>
</dbReference>
<dbReference type="GO" id="GO:0070531">
    <property type="term" value="C:BRCA1-A complex"/>
    <property type="evidence" value="ECO:0000250"/>
    <property type="project" value="UniProtKB"/>
</dbReference>
<dbReference type="GO" id="GO:0070552">
    <property type="term" value="C:BRISC complex"/>
    <property type="evidence" value="ECO:0000250"/>
    <property type="project" value="UniProtKB"/>
</dbReference>
<dbReference type="GO" id="GO:0005737">
    <property type="term" value="C:cytoplasm"/>
    <property type="evidence" value="ECO:0000266"/>
    <property type="project" value="RGD"/>
</dbReference>
<dbReference type="GO" id="GO:0000152">
    <property type="term" value="C:nuclear ubiquitin ligase complex"/>
    <property type="evidence" value="ECO:0000266"/>
    <property type="project" value="RGD"/>
</dbReference>
<dbReference type="GO" id="GO:0005634">
    <property type="term" value="C:nucleus"/>
    <property type="evidence" value="ECO:0000250"/>
    <property type="project" value="UniProtKB"/>
</dbReference>
<dbReference type="GO" id="GO:0000922">
    <property type="term" value="C:spindle pole"/>
    <property type="evidence" value="ECO:0007669"/>
    <property type="project" value="UniProtKB-SubCell"/>
</dbReference>
<dbReference type="GO" id="GO:0000151">
    <property type="term" value="C:ubiquitin ligase complex"/>
    <property type="evidence" value="ECO:0000266"/>
    <property type="project" value="RGD"/>
</dbReference>
<dbReference type="GO" id="GO:0004843">
    <property type="term" value="F:cysteine-type deubiquitinase activity"/>
    <property type="evidence" value="ECO:0007669"/>
    <property type="project" value="InterPro"/>
</dbReference>
<dbReference type="GO" id="GO:0030234">
    <property type="term" value="F:enzyme regulator activity"/>
    <property type="evidence" value="ECO:0000266"/>
    <property type="project" value="RGD"/>
</dbReference>
<dbReference type="GO" id="GO:0061578">
    <property type="term" value="F:K63-linked deubiquitinase activity"/>
    <property type="evidence" value="ECO:0000266"/>
    <property type="project" value="RGD"/>
</dbReference>
<dbReference type="GO" id="GO:0046872">
    <property type="term" value="F:metal ion binding"/>
    <property type="evidence" value="ECO:0007669"/>
    <property type="project" value="UniProtKB-KW"/>
</dbReference>
<dbReference type="GO" id="GO:0140492">
    <property type="term" value="F:metal-dependent deubiquitinase activity"/>
    <property type="evidence" value="ECO:0000250"/>
    <property type="project" value="UniProtKB"/>
</dbReference>
<dbReference type="GO" id="GO:0008237">
    <property type="term" value="F:metallopeptidase activity"/>
    <property type="evidence" value="ECO:0000250"/>
    <property type="project" value="UniProtKB"/>
</dbReference>
<dbReference type="GO" id="GO:0031593">
    <property type="term" value="F:polyubiquitin modification-dependent protein binding"/>
    <property type="evidence" value="ECO:0000250"/>
    <property type="project" value="UniProtKB"/>
</dbReference>
<dbReference type="GO" id="GO:0051301">
    <property type="term" value="P:cell division"/>
    <property type="evidence" value="ECO:0007669"/>
    <property type="project" value="UniProtKB-KW"/>
</dbReference>
<dbReference type="GO" id="GO:0071479">
    <property type="term" value="P:cellular response to ionizing radiation"/>
    <property type="evidence" value="ECO:0000266"/>
    <property type="project" value="RGD"/>
</dbReference>
<dbReference type="GO" id="GO:0006338">
    <property type="term" value="P:chromatin remodeling"/>
    <property type="evidence" value="ECO:0000250"/>
    <property type="project" value="UniProtKB"/>
</dbReference>
<dbReference type="GO" id="GO:0140861">
    <property type="term" value="P:DNA repair-dependent chromatin remodeling"/>
    <property type="evidence" value="ECO:0000250"/>
    <property type="project" value="UniProtKB"/>
</dbReference>
<dbReference type="GO" id="GO:0006302">
    <property type="term" value="P:double-strand break repair"/>
    <property type="evidence" value="ECO:0000250"/>
    <property type="project" value="UniProtKB"/>
</dbReference>
<dbReference type="GO" id="GO:0007095">
    <property type="term" value="P:mitotic G2 DNA damage checkpoint signaling"/>
    <property type="evidence" value="ECO:0000250"/>
    <property type="project" value="UniProtKB"/>
</dbReference>
<dbReference type="GO" id="GO:0045739">
    <property type="term" value="P:positive regulation of DNA repair"/>
    <property type="evidence" value="ECO:0000250"/>
    <property type="project" value="UniProtKB"/>
</dbReference>
<dbReference type="GO" id="GO:1900227">
    <property type="term" value="P:positive regulation of NLRP3 inflammasome complex assembly"/>
    <property type="evidence" value="ECO:0000250"/>
    <property type="project" value="UniProtKB"/>
</dbReference>
<dbReference type="GO" id="GO:0070536">
    <property type="term" value="P:protein K63-linked deubiquitination"/>
    <property type="evidence" value="ECO:0000250"/>
    <property type="project" value="UniProtKB"/>
</dbReference>
<dbReference type="GO" id="GO:0006508">
    <property type="term" value="P:proteolysis"/>
    <property type="evidence" value="ECO:0007669"/>
    <property type="project" value="UniProtKB-KW"/>
</dbReference>
<dbReference type="GO" id="GO:0010212">
    <property type="term" value="P:response to ionizing radiation"/>
    <property type="evidence" value="ECO:0000250"/>
    <property type="project" value="UniProtKB"/>
</dbReference>
<dbReference type="GO" id="GO:0010165">
    <property type="term" value="P:response to X-ray"/>
    <property type="evidence" value="ECO:0000266"/>
    <property type="project" value="RGD"/>
</dbReference>
<dbReference type="CDD" id="cd08068">
    <property type="entry name" value="MPN_BRCC36"/>
    <property type="match status" value="1"/>
</dbReference>
<dbReference type="FunFam" id="3.40.140.10:FF:000015">
    <property type="entry name" value="Lys-63-specific deubiquitinase BRCC36 isoform 3"/>
    <property type="match status" value="1"/>
</dbReference>
<dbReference type="Gene3D" id="3.40.140.10">
    <property type="entry name" value="Cytidine Deaminase, domain 2"/>
    <property type="match status" value="1"/>
</dbReference>
<dbReference type="InterPro" id="IPR040749">
    <property type="entry name" value="BRCC36_C"/>
</dbReference>
<dbReference type="InterPro" id="IPR000555">
    <property type="entry name" value="JAMM/MPN+_dom"/>
</dbReference>
<dbReference type="InterPro" id="IPR050242">
    <property type="entry name" value="JAMM_MPN+_peptidase_M67A"/>
</dbReference>
<dbReference type="InterPro" id="IPR037518">
    <property type="entry name" value="MPN"/>
</dbReference>
<dbReference type="InterPro" id="IPR033860">
    <property type="entry name" value="MPN_BRCC36"/>
</dbReference>
<dbReference type="PANTHER" id="PTHR10410">
    <property type="entry name" value="EUKARYOTIC TRANSLATION INITIATION FACTOR 3 -RELATED"/>
    <property type="match status" value="1"/>
</dbReference>
<dbReference type="Pfam" id="PF18110">
    <property type="entry name" value="BRCC36_C"/>
    <property type="match status" value="1"/>
</dbReference>
<dbReference type="Pfam" id="PF01398">
    <property type="entry name" value="JAB"/>
    <property type="match status" value="1"/>
</dbReference>
<dbReference type="SMART" id="SM00232">
    <property type="entry name" value="JAB_MPN"/>
    <property type="match status" value="1"/>
</dbReference>
<dbReference type="SUPFAM" id="SSF102712">
    <property type="entry name" value="JAB1/MPN domain"/>
    <property type="match status" value="1"/>
</dbReference>
<dbReference type="PROSITE" id="PS50249">
    <property type="entry name" value="MPN"/>
    <property type="match status" value="1"/>
</dbReference>
<gene>
    <name type="primary">Brcc3</name>
    <name type="synonym">Brcc36</name>
</gene>
<reference key="1">
    <citation type="submission" date="2005-07" db="EMBL/GenBank/DDBJ databases">
        <authorList>
            <person name="Mural R.J."/>
            <person name="Adams M.D."/>
            <person name="Myers E.W."/>
            <person name="Smith H.O."/>
            <person name="Venter J.C."/>
        </authorList>
    </citation>
    <scope>NUCLEOTIDE SEQUENCE [LARGE SCALE GENOMIC DNA]</scope>
    <source>
        <strain>Brown Norway</strain>
    </source>
</reference>
<reference key="2">
    <citation type="journal article" date="2004" name="Genome Res.">
        <title>The status, quality, and expansion of the NIH full-length cDNA project: the Mammalian Gene Collection (MGC).</title>
        <authorList>
            <consortium name="The MGC Project Team"/>
        </authorList>
    </citation>
    <scope>NUCLEOTIDE SEQUENCE [LARGE SCALE MRNA]</scope>
    <source>
        <tissue>Kidney</tissue>
    </source>
</reference>
<sequence>MAVPVVQAVQAVHLESDAFLVCLNHALSTEKEEVMGLCIGELNDDVRSESKFAHAGSDVCTVPEKVDSIRVVHIHSVIILRRSDKRKDRVEISPEQLSAASTEAERLAELTGRPMRVVGWYHSHPHITVWPSHVDVRTQAMYQMMDQGFVGLIFSCFIEDKNTKTGRVLYTCFQSVQAQKSSDYERIEIPVHVVPHVTIGKVCLESAVELPKILCQEEQDAYRRIHSLTHLDSVTKIHNGSVFTKNLCSQMSAVSGPLLQWLEDRLEQNQQHLRELQREKEELMAELRSLE</sequence>
<keyword id="KW-0007">Acetylation</keyword>
<keyword id="KW-0131">Cell cycle</keyword>
<keyword id="KW-0132">Cell division</keyword>
<keyword id="KW-0156">Chromatin regulator</keyword>
<keyword id="KW-0963">Cytoplasm</keyword>
<keyword id="KW-0206">Cytoskeleton</keyword>
<keyword id="KW-0227">DNA damage</keyword>
<keyword id="KW-0234">DNA repair</keyword>
<keyword id="KW-0378">Hydrolase</keyword>
<keyword id="KW-0479">Metal-binding</keyword>
<keyword id="KW-0482">Metalloprotease</keyword>
<keyword id="KW-0498">Mitosis</keyword>
<keyword id="KW-0539">Nucleus</keyword>
<keyword id="KW-0597">Phosphoprotein</keyword>
<keyword id="KW-0645">Protease</keyword>
<keyword id="KW-1185">Reference proteome</keyword>
<keyword id="KW-0833">Ubl conjugation pathway</keyword>
<keyword id="KW-0862">Zinc</keyword>